<protein>
    <recommendedName>
        <fullName evidence="1">Glycogen synthase</fullName>
        <ecNumber evidence="1">2.4.1.21</ecNumber>
    </recommendedName>
    <alternativeName>
        <fullName evidence="1">Starch [bacterial glycogen] synthase</fullName>
    </alternativeName>
</protein>
<dbReference type="EC" id="2.4.1.21" evidence="1"/>
<dbReference type="EMBL" id="CP001339">
    <property type="protein sequence ID" value="ACL71965.1"/>
    <property type="molecule type" value="Genomic_DNA"/>
</dbReference>
<dbReference type="RefSeq" id="WP_012637453.1">
    <property type="nucleotide sequence ID" value="NC_011901.1"/>
</dbReference>
<dbReference type="SMR" id="B8GNA4"/>
<dbReference type="STRING" id="396588.Tgr7_0874"/>
<dbReference type="CAZy" id="GT5">
    <property type="family name" value="Glycosyltransferase Family 5"/>
</dbReference>
<dbReference type="KEGG" id="tgr:Tgr7_0874"/>
<dbReference type="eggNOG" id="COG0297">
    <property type="taxonomic scope" value="Bacteria"/>
</dbReference>
<dbReference type="HOGENOM" id="CLU_009583_18_5_6"/>
<dbReference type="OrthoDB" id="9808590at2"/>
<dbReference type="UniPathway" id="UPA00164"/>
<dbReference type="Proteomes" id="UP000002383">
    <property type="component" value="Chromosome"/>
</dbReference>
<dbReference type="GO" id="GO:0009011">
    <property type="term" value="F:alpha-1,4-glucan glucosyltransferase (ADP-glucose donor) activity"/>
    <property type="evidence" value="ECO:0007669"/>
    <property type="project" value="UniProtKB-UniRule"/>
</dbReference>
<dbReference type="GO" id="GO:0004373">
    <property type="term" value="F:alpha-1,4-glucan glucosyltransferase (UDP-glucose donor) activity"/>
    <property type="evidence" value="ECO:0007669"/>
    <property type="project" value="InterPro"/>
</dbReference>
<dbReference type="GO" id="GO:0005978">
    <property type="term" value="P:glycogen biosynthetic process"/>
    <property type="evidence" value="ECO:0007669"/>
    <property type="project" value="UniProtKB-UniRule"/>
</dbReference>
<dbReference type="CDD" id="cd03791">
    <property type="entry name" value="GT5_Glycogen_synthase_DULL1-like"/>
    <property type="match status" value="1"/>
</dbReference>
<dbReference type="Gene3D" id="3.40.50.2000">
    <property type="entry name" value="Glycogen Phosphorylase B"/>
    <property type="match status" value="2"/>
</dbReference>
<dbReference type="HAMAP" id="MF_00484">
    <property type="entry name" value="Glycogen_synth"/>
    <property type="match status" value="1"/>
</dbReference>
<dbReference type="InterPro" id="IPR001296">
    <property type="entry name" value="Glyco_trans_1"/>
</dbReference>
<dbReference type="InterPro" id="IPR011835">
    <property type="entry name" value="GS/SS"/>
</dbReference>
<dbReference type="InterPro" id="IPR013534">
    <property type="entry name" value="Starch_synth_cat_dom"/>
</dbReference>
<dbReference type="NCBIfam" id="TIGR02095">
    <property type="entry name" value="glgA"/>
    <property type="match status" value="1"/>
</dbReference>
<dbReference type="NCBIfam" id="NF001899">
    <property type="entry name" value="PRK00654.1-2"/>
    <property type="match status" value="1"/>
</dbReference>
<dbReference type="PANTHER" id="PTHR45825:SF11">
    <property type="entry name" value="ALPHA AMYLASE DOMAIN-CONTAINING PROTEIN"/>
    <property type="match status" value="1"/>
</dbReference>
<dbReference type="PANTHER" id="PTHR45825">
    <property type="entry name" value="GRANULE-BOUND STARCH SYNTHASE 1, CHLOROPLASTIC/AMYLOPLASTIC"/>
    <property type="match status" value="1"/>
</dbReference>
<dbReference type="Pfam" id="PF08323">
    <property type="entry name" value="Glyco_transf_5"/>
    <property type="match status" value="1"/>
</dbReference>
<dbReference type="Pfam" id="PF00534">
    <property type="entry name" value="Glycos_transf_1"/>
    <property type="match status" value="1"/>
</dbReference>
<dbReference type="SUPFAM" id="SSF53756">
    <property type="entry name" value="UDP-Glycosyltransferase/glycogen phosphorylase"/>
    <property type="match status" value="1"/>
</dbReference>
<proteinExistence type="inferred from homology"/>
<feature type="chain" id="PRO_1000190090" description="Glycogen synthase">
    <location>
        <begin position="1"/>
        <end position="483"/>
    </location>
</feature>
<feature type="binding site" evidence="1">
    <location>
        <position position="15"/>
    </location>
    <ligand>
        <name>ADP-alpha-D-glucose</name>
        <dbReference type="ChEBI" id="CHEBI:57498"/>
    </ligand>
</feature>
<keyword id="KW-0320">Glycogen biosynthesis</keyword>
<keyword id="KW-0328">Glycosyltransferase</keyword>
<keyword id="KW-1185">Reference proteome</keyword>
<keyword id="KW-0808">Transferase</keyword>
<reference key="1">
    <citation type="journal article" date="2011" name="Stand. Genomic Sci.">
        <title>Complete genome sequence of 'Thioalkalivibrio sulfidophilus' HL-EbGr7.</title>
        <authorList>
            <person name="Muyzer G."/>
            <person name="Sorokin D.Y."/>
            <person name="Mavromatis K."/>
            <person name="Lapidus A."/>
            <person name="Clum A."/>
            <person name="Ivanova N."/>
            <person name="Pati A."/>
            <person name="d'Haeseleer P."/>
            <person name="Woyke T."/>
            <person name="Kyrpides N.C."/>
        </authorList>
    </citation>
    <scope>NUCLEOTIDE SEQUENCE [LARGE SCALE GENOMIC DNA]</scope>
    <source>
        <strain>HL-EbGR7</strain>
    </source>
</reference>
<name>GLGA_THISH</name>
<organism>
    <name type="scientific">Thioalkalivibrio sulfidiphilus (strain HL-EbGR7)</name>
    <dbReference type="NCBI Taxonomy" id="396588"/>
    <lineage>
        <taxon>Bacteria</taxon>
        <taxon>Pseudomonadati</taxon>
        <taxon>Pseudomonadota</taxon>
        <taxon>Gammaproteobacteria</taxon>
        <taxon>Chromatiales</taxon>
        <taxon>Ectothiorhodospiraceae</taxon>
        <taxon>Thioalkalivibrio</taxon>
    </lineage>
</organism>
<gene>
    <name evidence="1" type="primary">glgA</name>
    <name type="ordered locus">Tgr7_0874</name>
</gene>
<accession>B8GNA4</accession>
<sequence length="483" mass="52854">MRILFASSEVHPLIKTGGLADVSASLPQALKRLRQDVRVVMPAYGSVLDKAGDLEQVTTLQLPGFPGDTVTLLSGTLPGSRVPLWLVDAPRLFRRAGDPYRAPDGHDWQDNYLRFGLFARLIEHLALDRAGLDWRPDVVHCNDWQAGLAPLMLSMHESRPATVFTIHNLAYQGLFPRHAFDALNLPPQLWHYQGLEFHGKLSFIKGGIGFADHITTVSPSYAREILTPQQGFGLDGLLNHRAGVLTGILNGVDYREWDPGKDRHLVARYSADDLSGKARCKAALQHHFKLPCHSGIPLLGHVGRMVAQKGVDLLLKAAEPLLAAGEAQLVVVGSGDATLEQTARSLAERYPEHMGLHIGYSEPLAHQLEAGADIFVMPSRFEPCGLNQMYSLRYGTVPVVRNTGGLADTVVDADPAHLAARDATGIQFDEATPQALADALARALALYHDPACWKRLMQAGMAQDFSWGRSAEAYLDLYKDLVS</sequence>
<comment type="function">
    <text evidence="1">Synthesizes alpha-1,4-glucan chains using ADP-glucose.</text>
</comment>
<comment type="catalytic activity">
    <reaction evidence="1">
        <text>[(1-&gt;4)-alpha-D-glucosyl](n) + ADP-alpha-D-glucose = [(1-&gt;4)-alpha-D-glucosyl](n+1) + ADP + H(+)</text>
        <dbReference type="Rhea" id="RHEA:18189"/>
        <dbReference type="Rhea" id="RHEA-COMP:9584"/>
        <dbReference type="Rhea" id="RHEA-COMP:9587"/>
        <dbReference type="ChEBI" id="CHEBI:15378"/>
        <dbReference type="ChEBI" id="CHEBI:15444"/>
        <dbReference type="ChEBI" id="CHEBI:57498"/>
        <dbReference type="ChEBI" id="CHEBI:456216"/>
        <dbReference type="EC" id="2.4.1.21"/>
    </reaction>
</comment>
<comment type="pathway">
    <text evidence="1">Glycan biosynthesis; glycogen biosynthesis.</text>
</comment>
<comment type="similarity">
    <text evidence="1">Belongs to the glycosyltransferase 1 family. Bacterial/plant glycogen synthase subfamily.</text>
</comment>
<evidence type="ECO:0000255" key="1">
    <source>
        <dbReference type="HAMAP-Rule" id="MF_00484"/>
    </source>
</evidence>